<gene>
    <name type="primary">hydB</name>
    <name type="ordered locus">WS1686</name>
</gene>
<proteinExistence type="evidence at protein level"/>
<sequence>MTKRIVVDPITRIEGHLRIEVVVDENNVIQDAFSTATLWRGLETILKGRDPRDAGFFTQRICGVCTYSHYKAGISAVENALGIKPPLNAELIRSLMSISLILHDHTVHFYHLHGLDWCDITSALKADPVAASKLAFKYSPNPIATGADELTAVQKRVAEFAAKGNLGPFANAYWGHKTYRFSPEQNLIVLSHYLKALEVQRVAAQMMAIWGAKQPHPQSLTVGGVTSVMDALDPSRLGDWLTKYKYVADFVNRAYYADVVMAAEVFKSEPSVLGGCNVKNFYSYQEIPLNKTEWMYSTGIVMDGDITKVHEINEDLITEEATHAWYKENKALHPYDGQQDPNYTGFKDMETVGPDGTMVKTKVIDEKGKYTWIKAPRYGGKPLEVGPLATIVVGLAAKNPRIEKVATQFLKDTGLPLAALFTTLGRTAARMLECKLSADYGFEAFNSLIANLKVDQSTYTTYKIDKNKEYKGRYMGTVPRGVLSHWVRIKNGVIQNYQAVVPSTWNAGPRDANGTKGPYEASLVGMKLQDLSQPLEIIRVIHSFDPCIACAVHVMDTKGNELSQYRVDPITVGCNL</sequence>
<protein>
    <recommendedName>
        <fullName>Quinone-reactive Ni/Fe-hydrogenase large chain</fullName>
        <ecNumber>1.12.5.1</ecNumber>
    </recommendedName>
    <alternativeName>
        <fullName>Hydrogen:quinone oxidoreductase</fullName>
    </alternativeName>
    <alternativeName>
        <fullName>Membrane-bound hydrogenase large subunit</fullName>
    </alternativeName>
</protein>
<feature type="initiator methionine" description="Removed" evidence="3">
    <location>
        <position position="1"/>
    </location>
</feature>
<feature type="chain" id="PRO_0000199718" description="Quinone-reactive Ni/Fe-hydrogenase large chain">
    <location>
        <begin position="2"/>
        <end position="576"/>
    </location>
</feature>
<feature type="binding site" evidence="2">
    <location>
        <position position="62"/>
    </location>
    <ligand>
        <name>Ni(2+)</name>
        <dbReference type="ChEBI" id="CHEBI:49786"/>
    </ligand>
</feature>
<feature type="binding site" evidence="2">
    <location>
        <position position="65"/>
    </location>
    <ligand>
        <name>Ni(2+)</name>
        <dbReference type="ChEBI" id="CHEBI:49786"/>
    </ligand>
</feature>
<feature type="binding site" evidence="2">
    <location>
        <position position="547"/>
    </location>
    <ligand>
        <name>Ni(2+)</name>
        <dbReference type="ChEBI" id="CHEBI:49786"/>
    </ligand>
</feature>
<feature type="binding site" evidence="2">
    <location>
        <position position="550"/>
    </location>
    <ligand>
        <name>Ni(2+)</name>
        <dbReference type="ChEBI" id="CHEBI:49786"/>
    </ligand>
</feature>
<evidence type="ECO:0000250" key="1"/>
<evidence type="ECO:0000255" key="2"/>
<evidence type="ECO:0000269" key="3">
    <source>
    </source>
</evidence>
<evidence type="ECO:0000305" key="4"/>
<dbReference type="EC" id="1.12.5.1"/>
<dbReference type="EMBL" id="X65189">
    <property type="protein sequence ID" value="CAA46303.1"/>
    <property type="molecule type" value="Genomic_DNA"/>
</dbReference>
<dbReference type="EMBL" id="BX571661">
    <property type="protein sequence ID" value="CAE10713.1"/>
    <property type="molecule type" value="Genomic_DNA"/>
</dbReference>
<dbReference type="PIR" id="S33853">
    <property type="entry name" value="S33853"/>
</dbReference>
<dbReference type="RefSeq" id="WP_011139497.1">
    <property type="nucleotide sequence ID" value="NC_005090.1"/>
</dbReference>
<dbReference type="SMR" id="P31883"/>
<dbReference type="STRING" id="273121.WS1686"/>
<dbReference type="TCDB" id="3.D.7.2.2">
    <property type="family name" value="the h2:heterodisulfide oxidoreductase (hho) family"/>
</dbReference>
<dbReference type="KEGG" id="wsu:WS1686"/>
<dbReference type="eggNOG" id="COG0374">
    <property type="taxonomic scope" value="Bacteria"/>
</dbReference>
<dbReference type="HOGENOM" id="CLU_030087_0_0_7"/>
<dbReference type="Proteomes" id="UP000000422">
    <property type="component" value="Chromosome"/>
</dbReference>
<dbReference type="GO" id="GO:0005886">
    <property type="term" value="C:plasma membrane"/>
    <property type="evidence" value="ECO:0007669"/>
    <property type="project" value="UniProtKB-SubCell"/>
</dbReference>
<dbReference type="GO" id="GO:0008901">
    <property type="term" value="F:ferredoxin hydrogenase activity"/>
    <property type="evidence" value="ECO:0007669"/>
    <property type="project" value="InterPro"/>
</dbReference>
<dbReference type="GO" id="GO:0047067">
    <property type="term" value="F:hydrogen:quinone oxidoreductase activity"/>
    <property type="evidence" value="ECO:0007669"/>
    <property type="project" value="UniProtKB-EC"/>
</dbReference>
<dbReference type="GO" id="GO:0016151">
    <property type="term" value="F:nickel cation binding"/>
    <property type="evidence" value="ECO:0007669"/>
    <property type="project" value="InterPro"/>
</dbReference>
<dbReference type="FunFam" id="1.10.645.10:FF:000002">
    <property type="entry name" value="Hydrogenase 2 large subunit"/>
    <property type="match status" value="1"/>
</dbReference>
<dbReference type="Gene3D" id="1.10.645.10">
    <property type="entry name" value="Cytochrome-c3 Hydrogenase, chain B"/>
    <property type="match status" value="1"/>
</dbReference>
<dbReference type="InterPro" id="IPR001501">
    <property type="entry name" value="Ni-dep_hyd_lsu"/>
</dbReference>
<dbReference type="InterPro" id="IPR018194">
    <property type="entry name" value="Ni-dep_hyd_lsu_Ni_BS"/>
</dbReference>
<dbReference type="InterPro" id="IPR029014">
    <property type="entry name" value="NiFe-Hase_large"/>
</dbReference>
<dbReference type="InterPro" id="IPR050867">
    <property type="entry name" value="NiFe/NiFeSe_hydrgnase_LSU"/>
</dbReference>
<dbReference type="PANTHER" id="PTHR42958">
    <property type="entry name" value="HYDROGENASE-2 LARGE CHAIN"/>
    <property type="match status" value="1"/>
</dbReference>
<dbReference type="PANTHER" id="PTHR42958:SF2">
    <property type="entry name" value="UPTAKE HYDROGENASE LARGE SUBUNIT"/>
    <property type="match status" value="1"/>
</dbReference>
<dbReference type="Pfam" id="PF00374">
    <property type="entry name" value="NiFeSe_Hases"/>
    <property type="match status" value="1"/>
</dbReference>
<dbReference type="SUPFAM" id="SSF56762">
    <property type="entry name" value="HydB/Nqo4-like"/>
    <property type="match status" value="1"/>
</dbReference>
<dbReference type="PROSITE" id="PS00507">
    <property type="entry name" value="NI_HGENASE_L_1"/>
    <property type="match status" value="1"/>
</dbReference>
<dbReference type="PROSITE" id="PS00508">
    <property type="entry name" value="NI_HGENASE_L_2"/>
    <property type="match status" value="1"/>
</dbReference>
<accession>P31883</accession>
<name>MBHL_WOLSU</name>
<keyword id="KW-1003">Cell membrane</keyword>
<keyword id="KW-0903">Direct protein sequencing</keyword>
<keyword id="KW-0472">Membrane</keyword>
<keyword id="KW-0479">Metal-binding</keyword>
<keyword id="KW-0533">Nickel</keyword>
<keyword id="KW-0560">Oxidoreductase</keyword>
<keyword id="KW-1185">Reference proteome</keyword>
<organism>
    <name type="scientific">Wolinella succinogenes (strain ATCC 29543 / DSM 1740 / CCUG 13145 / JCM 31913 / LMG 7466 / NCTC 11488 / FDC 602W)</name>
    <name type="common">Vibrio succinogenes</name>
    <dbReference type="NCBI Taxonomy" id="273121"/>
    <lineage>
        <taxon>Bacteria</taxon>
        <taxon>Pseudomonadati</taxon>
        <taxon>Campylobacterota</taxon>
        <taxon>Epsilonproteobacteria</taxon>
        <taxon>Campylobacterales</taxon>
        <taxon>Helicobacteraceae</taxon>
        <taxon>Wolinella</taxon>
    </lineage>
</organism>
<reference key="1">
    <citation type="journal article" date="1992" name="Eur. J. Biochem.">
        <title>The quinone-reactive Ni/Fe-hydrogenase of Wolinella succinogenes.</title>
        <authorList>
            <person name="Dross F."/>
            <person name="Geisler V."/>
            <person name="Lenger R."/>
            <person name="Theis F."/>
            <person name="Krafft T."/>
            <person name="Fahrenholz F."/>
            <person name="Kojro E."/>
            <person name="Duchene A."/>
            <person name="Tripier D."/>
            <person name="Juvenal K."/>
            <person name="Kroeger A."/>
        </authorList>
    </citation>
    <scope>NUCLEOTIDE SEQUENCE [GENOMIC DNA]</scope>
    <scope>PROTEIN SEQUENCE OF 2-11</scope>
</reference>
<reference key="2">
    <citation type="journal article" date="1993" name="Eur. J. Biochem.">
        <authorList>
            <person name="Dross F."/>
            <person name="Geisler V."/>
            <person name="Lenger R."/>
            <person name="Theis F."/>
            <person name="Krafft T."/>
            <person name="Fahrenholz F."/>
            <person name="Kojro E."/>
            <person name="Duchene A."/>
            <person name="Tripier D."/>
            <person name="Juvenal K."/>
            <person name="Kroeger A."/>
        </authorList>
    </citation>
    <scope>ERRATUM OF PUBMED:1587288</scope>
</reference>
<reference key="3">
    <citation type="journal article" date="2003" name="Proc. Natl. Acad. Sci. U.S.A.">
        <title>Complete genome sequence and analysis of Wolinella succinogenes.</title>
        <authorList>
            <person name="Baar C."/>
            <person name="Eppinger M."/>
            <person name="Raddatz G."/>
            <person name="Simon J."/>
            <person name="Lanz C."/>
            <person name="Klimmek O."/>
            <person name="Nandakumar R."/>
            <person name="Gross R."/>
            <person name="Rosinus A."/>
            <person name="Keller H."/>
            <person name="Jagtap P."/>
            <person name="Linke B."/>
            <person name="Meyer F."/>
            <person name="Lederer H."/>
            <person name="Schuster S.C."/>
        </authorList>
    </citation>
    <scope>NUCLEOTIDE SEQUENCE [LARGE SCALE GENOMIC DNA]</scope>
    <source>
        <strain>ATCC 29543 / DSM 1740 / CCUG 13145 / JCM 31913 / LMG 7466 / NCTC 11488 / FDC 602W</strain>
    </source>
</reference>
<comment type="function">
    <text>This enzyme recycles the H(2) produced by nitrogenase to increase the production of ATP and to protect nitrogenase against inhibition or damage by O(2) under carbon- or phosphate-limited conditions.</text>
</comment>
<comment type="catalytic activity">
    <reaction>
        <text>H2 + a menaquinone = a menaquinol</text>
        <dbReference type="Rhea" id="RHEA:18641"/>
        <dbReference type="Rhea" id="RHEA-COMP:9537"/>
        <dbReference type="Rhea" id="RHEA-COMP:9539"/>
        <dbReference type="ChEBI" id="CHEBI:16374"/>
        <dbReference type="ChEBI" id="CHEBI:18151"/>
        <dbReference type="ChEBI" id="CHEBI:18276"/>
        <dbReference type="EC" id="1.12.5.1"/>
    </reaction>
</comment>
<comment type="cofactor">
    <cofactor evidence="1">
        <name>Ni(2+)</name>
        <dbReference type="ChEBI" id="CHEBI:49786"/>
    </cofactor>
    <text evidence="1">Binds 1 nickel ion per subunit.</text>
</comment>
<comment type="subunit">
    <text>Heterodimer of a large and a small subunit.</text>
</comment>
<comment type="subcellular location">
    <subcellularLocation>
        <location>Cell membrane</location>
        <topology>Peripheral membrane protein</topology>
    </subcellularLocation>
</comment>
<comment type="similarity">
    <text evidence="4">Belongs to the [NiFe]/[NiFeSe] hydrogenase large subunit family.</text>
</comment>